<protein>
    <recommendedName>
        <fullName>Cytochrome c oxidase subunit 2</fullName>
        <ecNumber>7.1.1.9</ecNumber>
    </recommendedName>
    <alternativeName>
        <fullName>Cytochrome c oxidase polypeptide II</fullName>
    </alternativeName>
</protein>
<dbReference type="EC" id="7.1.1.9"/>
<dbReference type="EMBL" id="X64107">
    <property type="protein sequence ID" value="CAA45470.1"/>
    <property type="molecule type" value="Genomic_DNA"/>
</dbReference>
<dbReference type="EMBL" id="AJ001588">
    <property type="protein sequence ID" value="CAA04850.1"/>
    <property type="molecule type" value="Genomic_DNA"/>
</dbReference>
<dbReference type="PIR" id="T11483">
    <property type="entry name" value="T11483"/>
</dbReference>
<dbReference type="RefSeq" id="NP_007552.1">
    <property type="nucleotide sequence ID" value="NC_001913.1"/>
</dbReference>
<dbReference type="SMR" id="P98049"/>
<dbReference type="FunCoup" id="P98049">
    <property type="interactions" value="81"/>
</dbReference>
<dbReference type="STRING" id="9986.ENSOCUP00000026182"/>
<dbReference type="PaxDb" id="9986-ENSOCUP00000026182"/>
<dbReference type="Ensembl" id="ENSOCUT00000033124.1">
    <property type="protein sequence ID" value="ENSOCUP00000026182.1"/>
    <property type="gene ID" value="ENSOCUG00000029099.1"/>
</dbReference>
<dbReference type="GeneID" id="808233"/>
<dbReference type="KEGG" id="ocu:808233"/>
<dbReference type="CTD" id="4513"/>
<dbReference type="eggNOG" id="KOG4767">
    <property type="taxonomic scope" value="Eukaryota"/>
</dbReference>
<dbReference type="GeneTree" id="ENSGT00390000017410"/>
<dbReference type="HOGENOM" id="CLU_036876_2_3_1"/>
<dbReference type="InParanoid" id="P98049"/>
<dbReference type="OMA" id="WSYEYTD"/>
<dbReference type="OrthoDB" id="539285at2759"/>
<dbReference type="TreeFam" id="TF344269"/>
<dbReference type="Proteomes" id="UP000001811">
    <property type="component" value="Mitochondrion"/>
</dbReference>
<dbReference type="Bgee" id="ENSOCUG00000029099">
    <property type="expression patterns" value="Expressed in ovary and 16 other cell types or tissues"/>
</dbReference>
<dbReference type="ExpressionAtlas" id="P98049">
    <property type="expression patterns" value="baseline"/>
</dbReference>
<dbReference type="GO" id="GO:0005743">
    <property type="term" value="C:mitochondrial inner membrane"/>
    <property type="evidence" value="ECO:0007669"/>
    <property type="project" value="UniProtKB-SubCell"/>
</dbReference>
<dbReference type="GO" id="GO:0045277">
    <property type="term" value="C:respiratory chain complex IV"/>
    <property type="evidence" value="ECO:0000250"/>
    <property type="project" value="UniProtKB"/>
</dbReference>
<dbReference type="GO" id="GO:0005507">
    <property type="term" value="F:copper ion binding"/>
    <property type="evidence" value="ECO:0007669"/>
    <property type="project" value="InterPro"/>
</dbReference>
<dbReference type="GO" id="GO:0004129">
    <property type="term" value="F:cytochrome-c oxidase activity"/>
    <property type="evidence" value="ECO:0007669"/>
    <property type="project" value="UniProtKB-EC"/>
</dbReference>
<dbReference type="GO" id="GO:0042773">
    <property type="term" value="P:ATP synthesis coupled electron transport"/>
    <property type="evidence" value="ECO:0007669"/>
    <property type="project" value="TreeGrafter"/>
</dbReference>
<dbReference type="CDD" id="cd13912">
    <property type="entry name" value="CcO_II_C"/>
    <property type="match status" value="1"/>
</dbReference>
<dbReference type="FunFam" id="1.10.287.90:FF:000001">
    <property type="entry name" value="Cytochrome c oxidase subunit 2"/>
    <property type="match status" value="1"/>
</dbReference>
<dbReference type="FunFam" id="2.60.40.420:FF:000001">
    <property type="entry name" value="Cytochrome c oxidase subunit 2"/>
    <property type="match status" value="1"/>
</dbReference>
<dbReference type="Gene3D" id="1.10.287.90">
    <property type="match status" value="1"/>
</dbReference>
<dbReference type="Gene3D" id="2.60.40.420">
    <property type="entry name" value="Cupredoxins - blue copper proteins"/>
    <property type="match status" value="1"/>
</dbReference>
<dbReference type="InterPro" id="IPR045187">
    <property type="entry name" value="CcO_II"/>
</dbReference>
<dbReference type="InterPro" id="IPR002429">
    <property type="entry name" value="CcO_II-like_C"/>
</dbReference>
<dbReference type="InterPro" id="IPR034210">
    <property type="entry name" value="CcO_II_C"/>
</dbReference>
<dbReference type="InterPro" id="IPR001505">
    <property type="entry name" value="Copper_CuA"/>
</dbReference>
<dbReference type="InterPro" id="IPR008972">
    <property type="entry name" value="Cupredoxin"/>
</dbReference>
<dbReference type="InterPro" id="IPR014222">
    <property type="entry name" value="Cyt_c_oxidase_su2"/>
</dbReference>
<dbReference type="InterPro" id="IPR011759">
    <property type="entry name" value="Cyt_c_oxidase_su2_TM_dom"/>
</dbReference>
<dbReference type="InterPro" id="IPR036257">
    <property type="entry name" value="Cyt_c_oxidase_su2_TM_sf"/>
</dbReference>
<dbReference type="NCBIfam" id="TIGR02866">
    <property type="entry name" value="CoxB"/>
    <property type="match status" value="1"/>
</dbReference>
<dbReference type="PANTHER" id="PTHR22888:SF9">
    <property type="entry name" value="CYTOCHROME C OXIDASE SUBUNIT 2"/>
    <property type="match status" value="1"/>
</dbReference>
<dbReference type="PANTHER" id="PTHR22888">
    <property type="entry name" value="CYTOCHROME C OXIDASE, SUBUNIT II"/>
    <property type="match status" value="1"/>
</dbReference>
<dbReference type="Pfam" id="PF00116">
    <property type="entry name" value="COX2"/>
    <property type="match status" value="1"/>
</dbReference>
<dbReference type="Pfam" id="PF02790">
    <property type="entry name" value="COX2_TM"/>
    <property type="match status" value="1"/>
</dbReference>
<dbReference type="PRINTS" id="PR01166">
    <property type="entry name" value="CYCOXIDASEII"/>
</dbReference>
<dbReference type="SUPFAM" id="SSF49503">
    <property type="entry name" value="Cupredoxins"/>
    <property type="match status" value="1"/>
</dbReference>
<dbReference type="SUPFAM" id="SSF81464">
    <property type="entry name" value="Cytochrome c oxidase subunit II-like, transmembrane region"/>
    <property type="match status" value="1"/>
</dbReference>
<dbReference type="PROSITE" id="PS00078">
    <property type="entry name" value="COX2"/>
    <property type="match status" value="1"/>
</dbReference>
<dbReference type="PROSITE" id="PS50857">
    <property type="entry name" value="COX2_CUA"/>
    <property type="match status" value="1"/>
</dbReference>
<dbReference type="PROSITE" id="PS50999">
    <property type="entry name" value="COX2_TM"/>
    <property type="match status" value="1"/>
</dbReference>
<sequence length="227" mass="25970">MAYPFQLGFQDASSPIMEELLHFHDHTLMIVFLISSLVLYIISLMLTTKLTHTSTMDAQEVETIWTILPAIILILIALPSLRILYMMDEINNPSLTVKTMGHQWYWSYEYTDYEDLNFDSYMIPTSDLNPGDLRLLEVDNRVVLPMELPIRMLISSEDVLHSWAVPSLGLKTDAIPGRLNQATLISTRPGLFYGQCSEICGSNHSFMPIVLEMVPLKHFENWSLSMI</sequence>
<organism>
    <name type="scientific">Oryctolagus cuniculus</name>
    <name type="common">Rabbit</name>
    <dbReference type="NCBI Taxonomy" id="9986"/>
    <lineage>
        <taxon>Eukaryota</taxon>
        <taxon>Metazoa</taxon>
        <taxon>Chordata</taxon>
        <taxon>Craniata</taxon>
        <taxon>Vertebrata</taxon>
        <taxon>Euteleostomi</taxon>
        <taxon>Mammalia</taxon>
        <taxon>Eutheria</taxon>
        <taxon>Euarchontoglires</taxon>
        <taxon>Glires</taxon>
        <taxon>Lagomorpha</taxon>
        <taxon>Leporidae</taxon>
        <taxon>Oryctolagus</taxon>
    </lineage>
</organism>
<feature type="chain" id="PRO_0000183676" description="Cytochrome c oxidase subunit 2">
    <location>
        <begin position="1"/>
        <end position="227"/>
    </location>
</feature>
<feature type="topological domain" description="Mitochondrial intermembrane" evidence="3">
    <location>
        <begin position="1"/>
        <end position="14"/>
    </location>
</feature>
<feature type="transmembrane region" description="Helical; Name=I" evidence="3">
    <location>
        <begin position="15"/>
        <end position="45"/>
    </location>
</feature>
<feature type="topological domain" description="Mitochondrial matrix" evidence="3">
    <location>
        <begin position="46"/>
        <end position="59"/>
    </location>
</feature>
<feature type="transmembrane region" description="Helical; Name=II" evidence="3">
    <location>
        <begin position="60"/>
        <end position="87"/>
    </location>
</feature>
<feature type="topological domain" description="Mitochondrial intermembrane" evidence="3">
    <location>
        <begin position="88"/>
        <end position="227"/>
    </location>
</feature>
<feature type="binding site" evidence="3">
    <location>
        <position position="161"/>
    </location>
    <ligand>
        <name>Cu cation</name>
        <dbReference type="ChEBI" id="CHEBI:23378"/>
        <label>A1</label>
    </ligand>
</feature>
<feature type="binding site" evidence="3">
    <location>
        <position position="196"/>
    </location>
    <ligand>
        <name>Cu cation</name>
        <dbReference type="ChEBI" id="CHEBI:23378"/>
        <label>A1</label>
    </ligand>
</feature>
<feature type="binding site" evidence="3">
    <location>
        <position position="196"/>
    </location>
    <ligand>
        <name>Cu cation</name>
        <dbReference type="ChEBI" id="CHEBI:23378"/>
        <label>A2</label>
    </ligand>
</feature>
<feature type="binding site" evidence="3">
    <location>
        <position position="198"/>
    </location>
    <ligand>
        <name>Cu cation</name>
        <dbReference type="ChEBI" id="CHEBI:23378"/>
        <label>A2</label>
    </ligand>
</feature>
<feature type="binding site" evidence="3">
    <location>
        <position position="198"/>
    </location>
    <ligand>
        <name>Mg(2+)</name>
        <dbReference type="ChEBI" id="CHEBI:18420"/>
        <note>ligand shared with MT-CO1</note>
    </ligand>
</feature>
<feature type="binding site" evidence="3">
    <location>
        <position position="200"/>
    </location>
    <ligand>
        <name>Cu cation</name>
        <dbReference type="ChEBI" id="CHEBI:23378"/>
        <label>A1</label>
    </ligand>
</feature>
<feature type="binding site" evidence="3">
    <location>
        <position position="200"/>
    </location>
    <ligand>
        <name>Cu cation</name>
        <dbReference type="ChEBI" id="CHEBI:23378"/>
        <label>A2</label>
    </ligand>
</feature>
<feature type="binding site" evidence="3">
    <location>
        <position position="204"/>
    </location>
    <ligand>
        <name>Cu cation</name>
        <dbReference type="ChEBI" id="CHEBI:23378"/>
        <label>A2</label>
    </ligand>
</feature>
<feature type="binding site" evidence="3">
    <location>
        <position position="207"/>
    </location>
    <ligand>
        <name>Cu cation</name>
        <dbReference type="ChEBI" id="CHEBI:23378"/>
        <label>A1</label>
    </ligand>
</feature>
<feature type="sequence conflict" description="In Ref. 1; CAA45470." evidence="4" ref="1">
    <original>SS</original>
    <variation>VI</variation>
    <location>
        <begin position="13"/>
        <end position="14"/>
    </location>
</feature>
<feature type="sequence conflict" description="In Ref. 1; CAA45470." evidence="4" ref="1">
    <original>G</original>
    <variation>P</variation>
    <location>
        <position position="190"/>
    </location>
</feature>
<feature type="sequence conflict" description="In Ref. 1; CAA45470." evidence="4" ref="1">
    <original>G</original>
    <variation>A</variation>
    <location>
        <position position="201"/>
    </location>
</feature>
<accession>P98049</accession>
<accession>O79430</accession>
<keyword id="KW-0186">Copper</keyword>
<keyword id="KW-0249">Electron transport</keyword>
<keyword id="KW-0460">Magnesium</keyword>
<keyword id="KW-0472">Membrane</keyword>
<keyword id="KW-0479">Metal-binding</keyword>
<keyword id="KW-0496">Mitochondrion</keyword>
<keyword id="KW-0999">Mitochondrion inner membrane</keyword>
<keyword id="KW-1185">Reference proteome</keyword>
<keyword id="KW-0679">Respiratory chain</keyword>
<keyword id="KW-1278">Translocase</keyword>
<keyword id="KW-0812">Transmembrane</keyword>
<keyword id="KW-1133">Transmembrane helix</keyword>
<keyword id="KW-0813">Transport</keyword>
<evidence type="ECO:0000250" key="1">
    <source>
        <dbReference type="UniProtKB" id="P00403"/>
    </source>
</evidence>
<evidence type="ECO:0000250" key="2">
    <source>
        <dbReference type="UniProtKB" id="P00410"/>
    </source>
</evidence>
<evidence type="ECO:0000250" key="3">
    <source>
        <dbReference type="UniProtKB" id="P68530"/>
    </source>
</evidence>
<evidence type="ECO:0000305" key="4"/>
<evidence type="ECO:0000312" key="5">
    <source>
        <dbReference type="Proteomes" id="UP000001811"/>
    </source>
</evidence>
<proteinExistence type="inferred from homology"/>
<name>COX2_RABIT</name>
<comment type="function">
    <text evidence="2">Component of the cytochrome c oxidase, the last enzyme in the mitochondrial electron transport chain which drives oxidative phosphorylation. The respiratory chain contains 3 multisubunit complexes succinate dehydrogenase (complex II, CII), ubiquinol-cytochrome c oxidoreductase (cytochrome b-c1 complex, complex III, CIII) and cytochrome c oxidase (complex IV, CIV), that cooperate to transfer electrons derived from NADH and succinate to molecular oxygen, creating an electrochemical gradient over the inner membrane that drives transmembrane transport and the ATP synthase. Cytochrome c oxidase is the component of the respiratory chain that catalyzes the reduction of oxygen to water. Electrons originating from reduced cytochrome c in the intermembrane space (IMS) are transferred via the dinuclear copper A center (CU(A)) of subunit 2 and heme A of subunit 1 to the active site in subunit 1, a binuclear center (BNC) formed by heme A3 and copper B (CU(B)). The BNC reduces molecular oxygen to 2 water molecules using 4 electrons from cytochrome c in the IMS and 4 protons from the mitochondrial matrix.</text>
</comment>
<comment type="catalytic activity">
    <reaction evidence="2">
        <text>4 Fe(II)-[cytochrome c] + O2 + 8 H(+)(in) = 4 Fe(III)-[cytochrome c] + 2 H2O + 4 H(+)(out)</text>
        <dbReference type="Rhea" id="RHEA:11436"/>
        <dbReference type="Rhea" id="RHEA-COMP:10350"/>
        <dbReference type="Rhea" id="RHEA-COMP:14399"/>
        <dbReference type="ChEBI" id="CHEBI:15377"/>
        <dbReference type="ChEBI" id="CHEBI:15378"/>
        <dbReference type="ChEBI" id="CHEBI:15379"/>
        <dbReference type="ChEBI" id="CHEBI:29033"/>
        <dbReference type="ChEBI" id="CHEBI:29034"/>
        <dbReference type="EC" id="7.1.1.9"/>
    </reaction>
    <physiologicalReaction direction="left-to-right" evidence="2">
        <dbReference type="Rhea" id="RHEA:11437"/>
    </physiologicalReaction>
</comment>
<comment type="cofactor">
    <cofactor evidence="3">
        <name>Cu cation</name>
        <dbReference type="ChEBI" id="CHEBI:23378"/>
    </cofactor>
    <text evidence="3">Binds a dinuclear copper A center per subunit.</text>
</comment>
<comment type="subunit">
    <text evidence="1 3">Component of the cytochrome c oxidase (complex IV, CIV), a multisubunit enzyme composed of 14 subunits. The complex is composed of a catalytic core of 3 subunits MT-CO1, MT-CO2 and MT-CO3, encoded in the mitochondrial DNA, and 11 supernumerary subunits COX4I, COX5A, COX5B, COX6A, COX6B, COX6C, COX7A, COX7B, COX7C, COX8 and NDUFA4, which are encoded in the nuclear genome. The complex exists as a monomer or a dimer and forms supercomplexes (SCs) in the inner mitochondrial membrane with NADH-ubiquinone oxidoreductase (complex I, CI) and ubiquinol-cytochrome c oxidoreductase (cytochrome b-c1 complex, complex III, CIII), resulting in different assemblies (supercomplex SCI(1)III(2)IV(1) and megacomplex MCI(2)III(2)IV(2)) (By similarity). Found in a complex with TMEM177, COA6, COX18, COX20, SCO1 and SCO2. Interacts with TMEM177 in a COX20-dependent manner. Interacts with COX20. Interacts with COX16 (By similarity).</text>
</comment>
<comment type="subcellular location">
    <subcellularLocation>
        <location evidence="3">Mitochondrion inner membrane</location>
        <topology evidence="3">Multi-pass membrane protein</topology>
    </subcellularLocation>
</comment>
<comment type="similarity">
    <text evidence="4">Belongs to the cytochrome c oxidase subunit 2 family.</text>
</comment>
<reference key="1">
    <citation type="submission" date="1991-10" db="EMBL/GenBank/DDBJ databases">
        <authorList>
            <person name="Mignotte F."/>
        </authorList>
    </citation>
    <scope>NUCLEOTIDE SEQUENCE [GENOMIC DNA]</scope>
</reference>
<reference key="2">
    <citation type="journal article" date="1998" name="Genomics">
        <title>The complete mitochondrial DNA sequence of the rabbit, Oryctolagus cuniculus.</title>
        <authorList>
            <person name="Gissi C."/>
            <person name="Gullberg A."/>
            <person name="Arnason U."/>
        </authorList>
    </citation>
    <scope>NUCLEOTIDE SEQUENCE [LARGE SCALE GENOMIC DNA]</scope>
    <source>
        <strain evidence="5">Thorbecke</strain>
    </source>
</reference>
<gene>
    <name type="primary">MT-CO2</name>
    <name type="synonym">COII</name>
    <name type="synonym">COX2</name>
    <name type="synonym">COXII</name>
    <name type="synonym">MTCO2</name>
</gene>
<geneLocation type="mitochondrion"/>